<accession>O66112</accession>
<accession>O69011</accession>
<accession>Q5NM30</accession>
<comment type="function">
    <text evidence="1">The pyruvate dehydrogenase complex catalyzes the overall conversion of pyruvate to acetyl-CoA and CO(2). It contains multiple copies of three enzymatic components: pyruvate dehydrogenase (E1), dihydrolipoamide acetyltransferase (E2) and lipoamide dehydrogenase (E3) (By similarity).</text>
</comment>
<comment type="catalytic activity">
    <reaction>
        <text>N(6)-[(R)-lipoyl]-L-lysyl-[protein] + pyruvate + H(+) = N(6)-[(R)-S(8)-acetyldihydrolipoyl]-L-lysyl-[protein] + CO2</text>
        <dbReference type="Rhea" id="RHEA:19189"/>
        <dbReference type="Rhea" id="RHEA-COMP:10474"/>
        <dbReference type="Rhea" id="RHEA-COMP:10478"/>
        <dbReference type="ChEBI" id="CHEBI:15361"/>
        <dbReference type="ChEBI" id="CHEBI:15378"/>
        <dbReference type="ChEBI" id="CHEBI:16526"/>
        <dbReference type="ChEBI" id="CHEBI:83099"/>
        <dbReference type="ChEBI" id="CHEBI:83111"/>
        <dbReference type="EC" id="1.2.4.1"/>
    </reaction>
</comment>
<comment type="cofactor">
    <cofactor evidence="1">
        <name>thiamine diphosphate</name>
        <dbReference type="ChEBI" id="CHEBI:58937"/>
    </cofactor>
</comment>
<comment type="subunit">
    <text>Heterodimer of an alpha and a beta chain.</text>
</comment>
<reference key="1">
    <citation type="journal article" date="1998" name="J. Bacteriol.">
        <title>Purification of the pyruvate dehydrogenase multienzyme complex of Zymomonas mobilis and identification and sequence analysis of the corresponding genes.</title>
        <authorList>
            <person name="Neveling U."/>
            <person name="Klasen R."/>
            <person name="Bringer-Meyer S."/>
            <person name="Sahm H."/>
        </authorList>
    </citation>
    <scope>NUCLEOTIDE SEQUENCE [GENOMIC DNA]</scope>
    <source>
        <strain>ATCC 29191 / DSM 3580 / JCM 10190 / CECT 560 / NBRC 13756 / NCIMB 11199 / NRRL B-4490 / ZM6</strain>
    </source>
</reference>
<reference key="2">
    <citation type="submission" date="1998-04" db="EMBL/GenBank/DDBJ databases">
        <authorList>
            <person name="Lee J."/>
            <person name="Jin S."/>
            <person name="Kang H.S."/>
        </authorList>
    </citation>
    <scope>NUCLEOTIDE SEQUENCE [GENOMIC DNA]</scope>
    <source>
        <strain>ATCC 31821 / ZM4 / CP4</strain>
    </source>
</reference>
<reference key="3">
    <citation type="journal article" date="2005" name="Nat. Biotechnol.">
        <title>The genome sequence of the ethanologenic bacterium Zymomonas mobilis ZM4.</title>
        <authorList>
            <person name="Seo J.-S."/>
            <person name="Chong H."/>
            <person name="Park H.S."/>
            <person name="Yoon K.-O."/>
            <person name="Jung C."/>
            <person name="Kim J.J."/>
            <person name="Hong J.H."/>
            <person name="Kim H."/>
            <person name="Kim J.-H."/>
            <person name="Kil J.-I."/>
            <person name="Park C.J."/>
            <person name="Oh H.-M."/>
            <person name="Lee J.-S."/>
            <person name="Jin S.-J."/>
            <person name="Um H.-W."/>
            <person name="Lee H.-J."/>
            <person name="Oh S.-J."/>
            <person name="Kim J.Y."/>
            <person name="Kang H.L."/>
            <person name="Lee S.Y."/>
            <person name="Lee K.J."/>
            <person name="Kang H.S."/>
        </authorList>
    </citation>
    <scope>NUCLEOTIDE SEQUENCE [LARGE SCALE GENOMIC DNA]</scope>
    <source>
        <strain>ATCC 31821 / ZM4 / CP4</strain>
    </source>
</reference>
<protein>
    <recommendedName>
        <fullName>Pyruvate dehydrogenase E1 component subunit alpha</fullName>
        <ecNumber>1.2.4.1</ecNumber>
    </recommendedName>
</protein>
<proteinExistence type="inferred from homology"/>
<keyword id="KW-0560">Oxidoreductase</keyword>
<keyword id="KW-0670">Pyruvate</keyword>
<keyword id="KW-1185">Reference proteome</keyword>
<keyword id="KW-0786">Thiamine pyrophosphate</keyword>
<dbReference type="EC" id="1.2.4.1"/>
<dbReference type="EMBL" id="Y12884">
    <property type="protein sequence ID" value="CAA73384.1"/>
    <property type="molecule type" value="Genomic_DNA"/>
</dbReference>
<dbReference type="EMBL" id="AF086791">
    <property type="protein sequence ID" value="AAC70361.1"/>
    <property type="molecule type" value="Genomic_DNA"/>
</dbReference>
<dbReference type="EMBL" id="AE008692">
    <property type="protein sequence ID" value="AAV90230.1"/>
    <property type="molecule type" value="Genomic_DNA"/>
</dbReference>
<dbReference type="PIR" id="T33722">
    <property type="entry name" value="T33722"/>
</dbReference>
<dbReference type="RefSeq" id="WP_011241360.1">
    <property type="nucleotide sequence ID" value="NZ_CP035711.1"/>
</dbReference>
<dbReference type="SMR" id="O66112"/>
<dbReference type="STRING" id="264203.ZMO1606"/>
<dbReference type="GeneID" id="79905059"/>
<dbReference type="KEGG" id="zmo:ZMO1606"/>
<dbReference type="eggNOG" id="COG1071">
    <property type="taxonomic scope" value="Bacteria"/>
</dbReference>
<dbReference type="HOGENOM" id="CLU_029393_5_2_5"/>
<dbReference type="Proteomes" id="UP000001173">
    <property type="component" value="Chromosome"/>
</dbReference>
<dbReference type="GO" id="GO:0043231">
    <property type="term" value="C:intracellular membrane-bounded organelle"/>
    <property type="evidence" value="ECO:0007669"/>
    <property type="project" value="InterPro"/>
</dbReference>
<dbReference type="GO" id="GO:0004739">
    <property type="term" value="F:pyruvate dehydrogenase (acetyl-transferring) activity"/>
    <property type="evidence" value="ECO:0007669"/>
    <property type="project" value="UniProtKB-EC"/>
</dbReference>
<dbReference type="GO" id="GO:0006086">
    <property type="term" value="P:pyruvate decarboxylation to acetyl-CoA"/>
    <property type="evidence" value="ECO:0007669"/>
    <property type="project" value="InterPro"/>
</dbReference>
<dbReference type="CDD" id="cd02000">
    <property type="entry name" value="TPP_E1_PDC_ADC_BCADC"/>
    <property type="match status" value="1"/>
</dbReference>
<dbReference type="FunFam" id="3.40.50.970:FF:000013">
    <property type="entry name" value="Pyruvate dehydrogenase E1 component subunit alpha"/>
    <property type="match status" value="1"/>
</dbReference>
<dbReference type="Gene3D" id="3.40.50.970">
    <property type="match status" value="1"/>
</dbReference>
<dbReference type="InterPro" id="IPR001017">
    <property type="entry name" value="DH_E1"/>
</dbReference>
<dbReference type="InterPro" id="IPR050642">
    <property type="entry name" value="PDH_E1_Alpha_Subunit"/>
</dbReference>
<dbReference type="InterPro" id="IPR017597">
    <property type="entry name" value="Pyrv_DH_E1_asu_subgrp-y"/>
</dbReference>
<dbReference type="InterPro" id="IPR029061">
    <property type="entry name" value="THDP-binding"/>
</dbReference>
<dbReference type="NCBIfam" id="TIGR03182">
    <property type="entry name" value="PDH_E1_alph_y"/>
    <property type="match status" value="1"/>
</dbReference>
<dbReference type="PANTHER" id="PTHR11516:SF60">
    <property type="entry name" value="PYRUVATE DEHYDROGENASE E1 COMPONENT SUBUNIT ALPHA"/>
    <property type="match status" value="1"/>
</dbReference>
<dbReference type="PANTHER" id="PTHR11516">
    <property type="entry name" value="PYRUVATE DEHYDROGENASE E1 COMPONENT, ALPHA SUBUNIT BACTERIAL AND ORGANELLAR"/>
    <property type="match status" value="1"/>
</dbReference>
<dbReference type="Pfam" id="PF00676">
    <property type="entry name" value="E1_dh"/>
    <property type="match status" value="1"/>
</dbReference>
<dbReference type="SUPFAM" id="SSF52518">
    <property type="entry name" value="Thiamin diphosphate-binding fold (THDP-binding)"/>
    <property type="match status" value="1"/>
</dbReference>
<gene>
    <name type="primary">pdhA</name>
    <name type="synonym">pdhAalpha</name>
    <name type="ordered locus">ZMO1606</name>
</gene>
<organism>
    <name type="scientific">Zymomonas mobilis subsp. mobilis (strain ATCC 31821 / ZM4 / CP4)</name>
    <dbReference type="NCBI Taxonomy" id="264203"/>
    <lineage>
        <taxon>Bacteria</taxon>
        <taxon>Pseudomonadati</taxon>
        <taxon>Pseudomonadota</taxon>
        <taxon>Alphaproteobacteria</taxon>
        <taxon>Sphingomonadales</taxon>
        <taxon>Zymomonadaceae</taxon>
        <taxon>Zymomonas</taxon>
    </lineage>
</organism>
<feature type="chain" id="PRO_0000162213" description="Pyruvate dehydrogenase E1 component subunit alpha">
    <location>
        <begin position="1"/>
        <end position="354"/>
    </location>
</feature>
<feature type="region of interest" description="Disordered" evidence="2">
    <location>
        <begin position="1"/>
        <end position="29"/>
    </location>
</feature>
<feature type="sequence conflict" description="In Ref. 2; AAC70361." evidence="3" ref="2">
    <original>C</original>
    <variation>N</variation>
    <location>
        <position position="69"/>
    </location>
</feature>
<feature type="sequence conflict" description="In Ref. 2; AAC70361." evidence="3" ref="2">
    <location>
        <position position="309"/>
    </location>
</feature>
<evidence type="ECO:0000250" key="1"/>
<evidence type="ECO:0000256" key="2">
    <source>
        <dbReference type="SAM" id="MobiDB-lite"/>
    </source>
</evidence>
<evidence type="ECO:0000305" key="3"/>
<sequence>MAKATQDSNRPHKADVGSAIPNHDLPPIPGRYHADREELLEFYRRMLMIRRFEERCGQLYGLGLIAGFCHLYIGQEAVAVGLQAALQPGRDSVITGYREHGHMLAYGIDPKIVMAELTGRASGISHGKGGSMHMFSTEHKFFGGNGIVGAQVPLGAGLAFAHKYRNDGGCSAAYFGDGSANQGQVYEAYNMAALWKLPVIFVIENNGYAMGTSIQRANAHTALSERGAGFGIPALVVDGMDVLEVRGAATVAVDWVQAGKGPIILEMKTYRYRGHSMSDPARYRSREEVNDMKENHDPLDNLKKDLFAAGVPEAELVKLDEDIRQQVKEAADFAEKAPLPADEELYTNILVGKY</sequence>
<name>ODPA_ZYMMO</name>